<feature type="chain" id="PRO_0000153027" description="Probable GTP 3',8-cyclase">
    <location>
        <begin position="1"/>
        <end position="313"/>
    </location>
</feature>
<feature type="domain" description="Radical SAM core" evidence="2">
    <location>
        <begin position="4"/>
        <end position="224"/>
    </location>
</feature>
<feature type="binding site" evidence="1">
    <location>
        <position position="13"/>
    </location>
    <ligand>
        <name>GTP</name>
        <dbReference type="ChEBI" id="CHEBI:37565"/>
    </ligand>
</feature>
<feature type="binding site" evidence="1">
    <location>
        <position position="20"/>
    </location>
    <ligand>
        <name>[4Fe-4S] cluster</name>
        <dbReference type="ChEBI" id="CHEBI:49883"/>
        <label>1</label>
        <note>4Fe-4S-S-AdoMet</note>
    </ligand>
</feature>
<feature type="binding site" evidence="1">
    <location>
        <position position="24"/>
    </location>
    <ligand>
        <name>[4Fe-4S] cluster</name>
        <dbReference type="ChEBI" id="CHEBI:49883"/>
        <label>1</label>
        <note>4Fe-4S-S-AdoMet</note>
    </ligand>
</feature>
<feature type="binding site" evidence="1">
    <location>
        <position position="27"/>
    </location>
    <ligand>
        <name>[4Fe-4S] cluster</name>
        <dbReference type="ChEBI" id="CHEBI:49883"/>
        <label>1</label>
        <note>4Fe-4S-S-AdoMet</note>
    </ligand>
</feature>
<feature type="binding site" evidence="1">
    <location>
        <position position="60"/>
    </location>
    <ligand>
        <name>GTP</name>
        <dbReference type="ChEBI" id="CHEBI:37565"/>
    </ligand>
</feature>
<feature type="binding site" evidence="1">
    <location>
        <position position="64"/>
    </location>
    <ligand>
        <name>S-adenosyl-L-methionine</name>
        <dbReference type="ChEBI" id="CHEBI:59789"/>
    </ligand>
</feature>
<feature type="binding site" evidence="1">
    <location>
        <position position="90"/>
    </location>
    <ligand>
        <name>GTP</name>
        <dbReference type="ChEBI" id="CHEBI:37565"/>
    </ligand>
</feature>
<feature type="binding site" evidence="1">
    <location>
        <position position="114"/>
    </location>
    <ligand>
        <name>S-adenosyl-L-methionine</name>
        <dbReference type="ChEBI" id="CHEBI:59789"/>
    </ligand>
</feature>
<feature type="binding site" evidence="1">
    <location>
        <position position="151"/>
    </location>
    <ligand>
        <name>GTP</name>
        <dbReference type="ChEBI" id="CHEBI:37565"/>
    </ligand>
</feature>
<feature type="binding site" evidence="1">
    <location>
        <position position="244"/>
    </location>
    <ligand>
        <name>[4Fe-4S] cluster</name>
        <dbReference type="ChEBI" id="CHEBI:49883"/>
        <label>2</label>
        <note>4Fe-4S-substrate</note>
    </ligand>
</feature>
<feature type="binding site" evidence="1">
    <location>
        <position position="247"/>
    </location>
    <ligand>
        <name>[4Fe-4S] cluster</name>
        <dbReference type="ChEBI" id="CHEBI:49883"/>
        <label>2</label>
        <note>4Fe-4S-substrate</note>
    </ligand>
</feature>
<feature type="binding site" evidence="1">
    <location>
        <begin position="249"/>
        <end position="251"/>
    </location>
    <ligand>
        <name>GTP</name>
        <dbReference type="ChEBI" id="CHEBI:37565"/>
    </ligand>
</feature>
<feature type="binding site" evidence="1">
    <location>
        <position position="261"/>
    </location>
    <ligand>
        <name>[4Fe-4S] cluster</name>
        <dbReference type="ChEBI" id="CHEBI:49883"/>
        <label>2</label>
        <note>4Fe-4S-substrate</note>
    </ligand>
</feature>
<sequence length="313" mass="35435">MKDVYGRELEDLRITLTHACNFTCFFCHMEGENDGDSLLSADQISLVAQIGMEFGIRTVKLTGGEPTLRRDLPEIISKLKEVGIKEVSMTTNGYLLKELAGKLKDAGLDRVNISLHSIDPVIFKEVTGVNVLSKVVEGIEEAKKVGLRPLKLNYVVTRKNAKGIFEFINFASSSNIDEIHLIELHPVGLGKEAFYTHVDMSDIEGRLNEDCTLVEIRNKHKRPRYKCGNLVVEVVKPYANPIFCSGCNRIRLTVDGKLKTCLYRDDKIIDISDIIKSSYSTEEKEELLREAYRLAILIREPNFRFRYETSKTG</sequence>
<keyword id="KW-0004">4Fe-4S</keyword>
<keyword id="KW-0342">GTP-binding</keyword>
<keyword id="KW-0408">Iron</keyword>
<keyword id="KW-0411">Iron-sulfur</keyword>
<keyword id="KW-0456">Lyase</keyword>
<keyword id="KW-0479">Metal-binding</keyword>
<keyword id="KW-0501">Molybdenum cofactor biosynthesis</keyword>
<keyword id="KW-0547">Nucleotide-binding</keyword>
<keyword id="KW-1185">Reference proteome</keyword>
<keyword id="KW-0949">S-adenosyl-L-methionine</keyword>
<organism>
    <name type="scientific">Sulfolobus acidocaldarius (strain ATCC 33909 / DSM 639 / JCM 8929 / NBRC 15157 / NCIMB 11770)</name>
    <dbReference type="NCBI Taxonomy" id="330779"/>
    <lineage>
        <taxon>Archaea</taxon>
        <taxon>Thermoproteota</taxon>
        <taxon>Thermoprotei</taxon>
        <taxon>Sulfolobales</taxon>
        <taxon>Sulfolobaceae</taxon>
        <taxon>Sulfolobus</taxon>
    </lineage>
</organism>
<proteinExistence type="inferred from homology"/>
<dbReference type="EC" id="4.1.99.22" evidence="1"/>
<dbReference type="EMBL" id="CP000077">
    <property type="protein sequence ID" value="AAY80800.1"/>
    <property type="molecule type" value="Genomic_DNA"/>
</dbReference>
<dbReference type="RefSeq" id="WP_011278302.1">
    <property type="nucleotide sequence ID" value="NC_007181.1"/>
</dbReference>
<dbReference type="SMR" id="Q4J8T0"/>
<dbReference type="STRING" id="330779.Saci_1479"/>
<dbReference type="GeneID" id="14551974"/>
<dbReference type="GeneID" id="78441822"/>
<dbReference type="KEGG" id="sai:Saci_1479"/>
<dbReference type="PATRIC" id="fig|330779.12.peg.1423"/>
<dbReference type="eggNOG" id="arCOG00930">
    <property type="taxonomic scope" value="Archaea"/>
</dbReference>
<dbReference type="HOGENOM" id="CLU_009273_0_1_2"/>
<dbReference type="UniPathway" id="UPA00344"/>
<dbReference type="Proteomes" id="UP000001018">
    <property type="component" value="Chromosome"/>
</dbReference>
<dbReference type="GO" id="GO:0051539">
    <property type="term" value="F:4 iron, 4 sulfur cluster binding"/>
    <property type="evidence" value="ECO:0007669"/>
    <property type="project" value="UniProtKB-UniRule"/>
</dbReference>
<dbReference type="GO" id="GO:0061799">
    <property type="term" value="F:cyclic pyranopterin monophosphate synthase activity"/>
    <property type="evidence" value="ECO:0007669"/>
    <property type="project" value="TreeGrafter"/>
</dbReference>
<dbReference type="GO" id="GO:0061798">
    <property type="term" value="F:GTP 3',8'-cyclase activity"/>
    <property type="evidence" value="ECO:0007669"/>
    <property type="project" value="UniProtKB-UniRule"/>
</dbReference>
<dbReference type="GO" id="GO:0005525">
    <property type="term" value="F:GTP binding"/>
    <property type="evidence" value="ECO:0007669"/>
    <property type="project" value="UniProtKB-UniRule"/>
</dbReference>
<dbReference type="GO" id="GO:0046872">
    <property type="term" value="F:metal ion binding"/>
    <property type="evidence" value="ECO:0007669"/>
    <property type="project" value="UniProtKB-KW"/>
</dbReference>
<dbReference type="GO" id="GO:1904047">
    <property type="term" value="F:S-adenosyl-L-methionine binding"/>
    <property type="evidence" value="ECO:0007669"/>
    <property type="project" value="UniProtKB-UniRule"/>
</dbReference>
<dbReference type="GO" id="GO:0006777">
    <property type="term" value="P:Mo-molybdopterin cofactor biosynthetic process"/>
    <property type="evidence" value="ECO:0007669"/>
    <property type="project" value="UniProtKB-UniRule"/>
</dbReference>
<dbReference type="CDD" id="cd01335">
    <property type="entry name" value="Radical_SAM"/>
    <property type="match status" value="1"/>
</dbReference>
<dbReference type="Gene3D" id="3.20.20.70">
    <property type="entry name" value="Aldolase class I"/>
    <property type="match status" value="1"/>
</dbReference>
<dbReference type="HAMAP" id="MF_01225_A">
    <property type="entry name" value="MoaA_A"/>
    <property type="match status" value="1"/>
</dbReference>
<dbReference type="InterPro" id="IPR013785">
    <property type="entry name" value="Aldolase_TIM"/>
</dbReference>
<dbReference type="InterPro" id="IPR006638">
    <property type="entry name" value="Elp3/MiaA/NifB-like_rSAM"/>
</dbReference>
<dbReference type="InterPro" id="IPR013485">
    <property type="entry name" value="MoaA_arc"/>
</dbReference>
<dbReference type="InterPro" id="IPR010505">
    <property type="entry name" value="MoaA_twitch"/>
</dbReference>
<dbReference type="InterPro" id="IPR050105">
    <property type="entry name" value="MoCo_biosynth_MoaA/MoaC"/>
</dbReference>
<dbReference type="InterPro" id="IPR007197">
    <property type="entry name" value="rSAM"/>
</dbReference>
<dbReference type="NCBIfam" id="TIGR02668">
    <property type="entry name" value="moaA_archaeal"/>
    <property type="match status" value="1"/>
</dbReference>
<dbReference type="NCBIfam" id="NF001199">
    <property type="entry name" value="PRK00164.2-1"/>
    <property type="match status" value="1"/>
</dbReference>
<dbReference type="PANTHER" id="PTHR22960:SF0">
    <property type="entry name" value="MOLYBDENUM COFACTOR BIOSYNTHESIS PROTEIN 1"/>
    <property type="match status" value="1"/>
</dbReference>
<dbReference type="PANTHER" id="PTHR22960">
    <property type="entry name" value="MOLYBDOPTERIN COFACTOR SYNTHESIS PROTEIN A"/>
    <property type="match status" value="1"/>
</dbReference>
<dbReference type="Pfam" id="PF06463">
    <property type="entry name" value="Mob_synth_C"/>
    <property type="match status" value="1"/>
</dbReference>
<dbReference type="Pfam" id="PF04055">
    <property type="entry name" value="Radical_SAM"/>
    <property type="match status" value="1"/>
</dbReference>
<dbReference type="SFLD" id="SFLDG01383">
    <property type="entry name" value="cyclic_pyranopterin_phosphate"/>
    <property type="match status" value="1"/>
</dbReference>
<dbReference type="SFLD" id="SFLDG01067">
    <property type="entry name" value="SPASM/twitch_domain_containing"/>
    <property type="match status" value="1"/>
</dbReference>
<dbReference type="SMART" id="SM00729">
    <property type="entry name" value="Elp3"/>
    <property type="match status" value="1"/>
</dbReference>
<dbReference type="SUPFAM" id="SSF102114">
    <property type="entry name" value="Radical SAM enzymes"/>
    <property type="match status" value="1"/>
</dbReference>
<dbReference type="PROSITE" id="PS51918">
    <property type="entry name" value="RADICAL_SAM"/>
    <property type="match status" value="1"/>
</dbReference>
<gene>
    <name evidence="1" type="primary">moaA</name>
    <name type="ordered locus">Saci_1479</name>
</gene>
<protein>
    <recommendedName>
        <fullName evidence="1">Probable GTP 3',8-cyclase</fullName>
        <ecNumber evidence="1">4.1.99.22</ecNumber>
    </recommendedName>
    <alternativeName>
        <fullName evidence="1">Molybdenum cofactor biosynthesis protein A</fullName>
    </alternativeName>
</protein>
<comment type="function">
    <text evidence="1">Catalyzes the cyclization of GTP to (8S)-3',8-cyclo-7,8-dihydroguanosine 5'-triphosphate.</text>
</comment>
<comment type="catalytic activity">
    <reaction evidence="1">
        <text>GTP + AH2 + S-adenosyl-L-methionine = (8S)-3',8-cyclo-7,8-dihydroguanosine 5'-triphosphate + 5'-deoxyadenosine + L-methionine + A + H(+)</text>
        <dbReference type="Rhea" id="RHEA:49576"/>
        <dbReference type="ChEBI" id="CHEBI:13193"/>
        <dbReference type="ChEBI" id="CHEBI:15378"/>
        <dbReference type="ChEBI" id="CHEBI:17319"/>
        <dbReference type="ChEBI" id="CHEBI:17499"/>
        <dbReference type="ChEBI" id="CHEBI:37565"/>
        <dbReference type="ChEBI" id="CHEBI:57844"/>
        <dbReference type="ChEBI" id="CHEBI:59789"/>
        <dbReference type="ChEBI" id="CHEBI:131766"/>
        <dbReference type="EC" id="4.1.99.22"/>
    </reaction>
</comment>
<comment type="cofactor">
    <cofactor evidence="1">
        <name>[4Fe-4S] cluster</name>
        <dbReference type="ChEBI" id="CHEBI:49883"/>
    </cofactor>
    <text evidence="1">Binds 2 [4Fe-4S] clusters. Binds 1 [4Fe-4S] cluster coordinated with 3 cysteines and an exchangeable S-adenosyl-L-methionine and 1 [4Fe-4S] cluster coordinated with 3 cysteines and the GTP-derived substrate.</text>
</comment>
<comment type="pathway">
    <text evidence="1">Cofactor biosynthesis; molybdopterin biosynthesis.</text>
</comment>
<comment type="similarity">
    <text evidence="1">Belongs to the radical SAM superfamily. MoaA family.</text>
</comment>
<evidence type="ECO:0000255" key="1">
    <source>
        <dbReference type="HAMAP-Rule" id="MF_01225"/>
    </source>
</evidence>
<evidence type="ECO:0000255" key="2">
    <source>
        <dbReference type="PROSITE-ProRule" id="PRU01266"/>
    </source>
</evidence>
<name>MOAA_SULAC</name>
<reference key="1">
    <citation type="journal article" date="2005" name="J. Bacteriol.">
        <title>The genome of Sulfolobus acidocaldarius, a model organism of the Crenarchaeota.</title>
        <authorList>
            <person name="Chen L."/>
            <person name="Bruegger K."/>
            <person name="Skovgaard M."/>
            <person name="Redder P."/>
            <person name="She Q."/>
            <person name="Torarinsson E."/>
            <person name="Greve B."/>
            <person name="Awayez M."/>
            <person name="Zibat A."/>
            <person name="Klenk H.-P."/>
            <person name="Garrett R.A."/>
        </authorList>
    </citation>
    <scope>NUCLEOTIDE SEQUENCE [LARGE SCALE GENOMIC DNA]</scope>
    <source>
        <strain>ATCC 33909 / DSM 639 / JCM 8929 / NBRC 15157 / NCIMB 11770</strain>
    </source>
</reference>
<accession>Q4J8T0</accession>